<organism>
    <name type="scientific">Shigella flexneri</name>
    <dbReference type="NCBI Taxonomy" id="623"/>
    <lineage>
        <taxon>Bacteria</taxon>
        <taxon>Pseudomonadati</taxon>
        <taxon>Pseudomonadota</taxon>
        <taxon>Gammaproteobacteria</taxon>
        <taxon>Enterobacterales</taxon>
        <taxon>Enterobacteriaceae</taxon>
        <taxon>Shigella</taxon>
    </lineage>
</organism>
<comment type="function">
    <text evidence="1">Specifically methylates the N4 position of cytidine in position 1402 (C1402) of 16S rRNA.</text>
</comment>
<comment type="catalytic activity">
    <reaction evidence="1">
        <text>cytidine(1402) in 16S rRNA + S-adenosyl-L-methionine = N(4)-methylcytidine(1402) in 16S rRNA + S-adenosyl-L-homocysteine + H(+)</text>
        <dbReference type="Rhea" id="RHEA:42928"/>
        <dbReference type="Rhea" id="RHEA-COMP:10286"/>
        <dbReference type="Rhea" id="RHEA-COMP:10287"/>
        <dbReference type="ChEBI" id="CHEBI:15378"/>
        <dbReference type="ChEBI" id="CHEBI:57856"/>
        <dbReference type="ChEBI" id="CHEBI:59789"/>
        <dbReference type="ChEBI" id="CHEBI:74506"/>
        <dbReference type="ChEBI" id="CHEBI:82748"/>
        <dbReference type="EC" id="2.1.1.199"/>
    </reaction>
</comment>
<comment type="subcellular location">
    <subcellularLocation>
        <location evidence="1">Cytoplasm</location>
    </subcellularLocation>
</comment>
<comment type="similarity">
    <text evidence="1">Belongs to the methyltransferase superfamily. RsmH family.</text>
</comment>
<name>RSMH_SHIFL</name>
<accession>Q83SN7</accession>
<keyword id="KW-0963">Cytoplasm</keyword>
<keyword id="KW-0489">Methyltransferase</keyword>
<keyword id="KW-1185">Reference proteome</keyword>
<keyword id="KW-0698">rRNA processing</keyword>
<keyword id="KW-0949">S-adenosyl-L-methionine</keyword>
<keyword id="KW-0808">Transferase</keyword>
<proteinExistence type="inferred from homology"/>
<evidence type="ECO:0000255" key="1">
    <source>
        <dbReference type="HAMAP-Rule" id="MF_01007"/>
    </source>
</evidence>
<reference key="1">
    <citation type="journal article" date="2002" name="Nucleic Acids Res.">
        <title>Genome sequence of Shigella flexneri 2a: insights into pathogenicity through comparison with genomes of Escherichia coli K12 and O157.</title>
        <authorList>
            <person name="Jin Q."/>
            <person name="Yuan Z."/>
            <person name="Xu J."/>
            <person name="Wang Y."/>
            <person name="Shen Y."/>
            <person name="Lu W."/>
            <person name="Wang J."/>
            <person name="Liu H."/>
            <person name="Yang J."/>
            <person name="Yang F."/>
            <person name="Zhang X."/>
            <person name="Zhang J."/>
            <person name="Yang G."/>
            <person name="Wu H."/>
            <person name="Qu D."/>
            <person name="Dong J."/>
            <person name="Sun L."/>
            <person name="Xue Y."/>
            <person name="Zhao A."/>
            <person name="Gao Y."/>
            <person name="Zhu J."/>
            <person name="Kan B."/>
            <person name="Ding K."/>
            <person name="Chen S."/>
            <person name="Cheng H."/>
            <person name="Yao Z."/>
            <person name="He B."/>
            <person name="Chen R."/>
            <person name="Ma D."/>
            <person name="Qiang B."/>
            <person name="Wen Y."/>
            <person name="Hou Y."/>
            <person name="Yu J."/>
        </authorList>
    </citation>
    <scope>NUCLEOTIDE SEQUENCE [LARGE SCALE GENOMIC DNA]</scope>
    <source>
        <strain>301 / Serotype 2a</strain>
    </source>
</reference>
<reference key="2">
    <citation type="journal article" date="2003" name="Infect. Immun.">
        <title>Complete genome sequence and comparative genomics of Shigella flexneri serotype 2a strain 2457T.</title>
        <authorList>
            <person name="Wei J."/>
            <person name="Goldberg M.B."/>
            <person name="Burland V."/>
            <person name="Venkatesan M.M."/>
            <person name="Deng W."/>
            <person name="Fournier G."/>
            <person name="Mayhew G.F."/>
            <person name="Plunkett G. III"/>
            <person name="Rose D.J."/>
            <person name="Darling A."/>
            <person name="Mau B."/>
            <person name="Perna N.T."/>
            <person name="Payne S.M."/>
            <person name="Runyen-Janecky L.J."/>
            <person name="Zhou S."/>
            <person name="Schwartz D.C."/>
            <person name="Blattner F.R."/>
        </authorList>
    </citation>
    <scope>NUCLEOTIDE SEQUENCE [LARGE SCALE GENOMIC DNA]</scope>
    <source>
        <strain>ATCC 700930 / 2457T / Serotype 2a</strain>
    </source>
</reference>
<protein>
    <recommendedName>
        <fullName evidence="1">Ribosomal RNA small subunit methyltransferase H</fullName>
        <ecNumber evidence="1">2.1.1.199</ecNumber>
    </recommendedName>
    <alternativeName>
        <fullName evidence="1">16S rRNA m(4)C1402 methyltransferase</fullName>
    </alternativeName>
    <alternativeName>
        <fullName evidence="1">rRNA (cytosine-N(4)-)-methyltransferase RsmH</fullName>
    </alternativeName>
</protein>
<sequence length="313" mass="34859">MMENYKHTTVLLDEAVNGLNIRPDGIYIDGTFGRGGHSRLILSQLGEEGRLLAIDRDPQAIAVAKTIDDPRFSIIHGPFSALGEYVAERDLIGKIDGILLDLGVSSPQLDDAERGFSFMRDGPLDMRMDPTRGQSAAEWLQTAEEADIAWVLKTYGEEHFAKRIARAIVERNREQPMTRTKELAEVVAAATPVKDKFKHPATRTFQAVRIWVNSELEEIEQALKSSLNVLAPGGRLSIISFHSLEDRIVKRFMRENSRGPQVPAGLPMTEEQLKKLGGRQLRALGKLMPGEEEVAENPRARSSVLRIAERTNA</sequence>
<feature type="chain" id="PRO_0000108702" description="Ribosomal RNA small subunit methyltransferase H">
    <location>
        <begin position="1"/>
        <end position="313"/>
    </location>
</feature>
<feature type="binding site" evidence="1">
    <location>
        <begin position="35"/>
        <end position="37"/>
    </location>
    <ligand>
        <name>S-adenosyl-L-methionine</name>
        <dbReference type="ChEBI" id="CHEBI:59789"/>
    </ligand>
</feature>
<feature type="binding site" evidence="1">
    <location>
        <position position="55"/>
    </location>
    <ligand>
        <name>S-adenosyl-L-methionine</name>
        <dbReference type="ChEBI" id="CHEBI:59789"/>
    </ligand>
</feature>
<feature type="binding site" evidence="1">
    <location>
        <position position="79"/>
    </location>
    <ligand>
        <name>S-adenosyl-L-methionine</name>
        <dbReference type="ChEBI" id="CHEBI:59789"/>
    </ligand>
</feature>
<feature type="binding site" evidence="1">
    <location>
        <position position="101"/>
    </location>
    <ligand>
        <name>S-adenosyl-L-methionine</name>
        <dbReference type="ChEBI" id="CHEBI:59789"/>
    </ligand>
</feature>
<feature type="binding site" evidence="1">
    <location>
        <position position="108"/>
    </location>
    <ligand>
        <name>S-adenosyl-L-methionine</name>
        <dbReference type="ChEBI" id="CHEBI:59789"/>
    </ligand>
</feature>
<gene>
    <name evidence="1" type="primary">rsmH</name>
    <name type="synonym">mraW</name>
    <name type="ordered locus">SF0079</name>
    <name type="ordered locus">S0081</name>
</gene>
<dbReference type="EC" id="2.1.1.199" evidence="1"/>
<dbReference type="EMBL" id="AE005674">
    <property type="protein sequence ID" value="AAN41744.1"/>
    <property type="molecule type" value="Genomic_DNA"/>
</dbReference>
<dbReference type="EMBL" id="AE014073">
    <property type="protein sequence ID" value="AAP15625.1"/>
    <property type="molecule type" value="Genomic_DNA"/>
</dbReference>
<dbReference type="RefSeq" id="NP_706037.1">
    <property type="nucleotide sequence ID" value="NC_004337.2"/>
</dbReference>
<dbReference type="RefSeq" id="WP_000970469.1">
    <property type="nucleotide sequence ID" value="NZ_WPGW01000007.1"/>
</dbReference>
<dbReference type="SMR" id="Q83SN7"/>
<dbReference type="STRING" id="198214.SF0079"/>
<dbReference type="PaxDb" id="198214-SF0079"/>
<dbReference type="GeneID" id="1024552"/>
<dbReference type="KEGG" id="sfl:SF0079"/>
<dbReference type="KEGG" id="sfx:S0081"/>
<dbReference type="PATRIC" id="fig|198214.7.peg.94"/>
<dbReference type="HOGENOM" id="CLU_038422_2_0_6"/>
<dbReference type="Proteomes" id="UP000001006">
    <property type="component" value="Chromosome"/>
</dbReference>
<dbReference type="Proteomes" id="UP000002673">
    <property type="component" value="Chromosome"/>
</dbReference>
<dbReference type="GO" id="GO:0005737">
    <property type="term" value="C:cytoplasm"/>
    <property type="evidence" value="ECO:0007669"/>
    <property type="project" value="UniProtKB-SubCell"/>
</dbReference>
<dbReference type="GO" id="GO:0071424">
    <property type="term" value="F:rRNA (cytosine-N4-)-methyltransferase activity"/>
    <property type="evidence" value="ECO:0007669"/>
    <property type="project" value="UniProtKB-UniRule"/>
</dbReference>
<dbReference type="GO" id="GO:0070475">
    <property type="term" value="P:rRNA base methylation"/>
    <property type="evidence" value="ECO:0007669"/>
    <property type="project" value="UniProtKB-UniRule"/>
</dbReference>
<dbReference type="FunFam" id="1.10.150.170:FF:000001">
    <property type="entry name" value="Ribosomal RNA small subunit methyltransferase H"/>
    <property type="match status" value="1"/>
</dbReference>
<dbReference type="Gene3D" id="1.10.150.170">
    <property type="entry name" value="Putative methyltransferase TM0872, insert domain"/>
    <property type="match status" value="1"/>
</dbReference>
<dbReference type="Gene3D" id="3.40.50.150">
    <property type="entry name" value="Vaccinia Virus protein VP39"/>
    <property type="match status" value="1"/>
</dbReference>
<dbReference type="HAMAP" id="MF_01007">
    <property type="entry name" value="16SrRNA_methyltr_H"/>
    <property type="match status" value="1"/>
</dbReference>
<dbReference type="InterPro" id="IPR002903">
    <property type="entry name" value="RsmH"/>
</dbReference>
<dbReference type="InterPro" id="IPR023397">
    <property type="entry name" value="SAM-dep_MeTrfase_MraW_recog"/>
</dbReference>
<dbReference type="InterPro" id="IPR029063">
    <property type="entry name" value="SAM-dependent_MTases_sf"/>
</dbReference>
<dbReference type="NCBIfam" id="TIGR00006">
    <property type="entry name" value="16S rRNA (cytosine(1402)-N(4))-methyltransferase RsmH"/>
    <property type="match status" value="1"/>
</dbReference>
<dbReference type="PANTHER" id="PTHR11265:SF0">
    <property type="entry name" value="12S RRNA N4-METHYLCYTIDINE METHYLTRANSFERASE"/>
    <property type="match status" value="1"/>
</dbReference>
<dbReference type="PANTHER" id="PTHR11265">
    <property type="entry name" value="S-ADENOSYL-METHYLTRANSFERASE MRAW"/>
    <property type="match status" value="1"/>
</dbReference>
<dbReference type="Pfam" id="PF01795">
    <property type="entry name" value="Methyltransf_5"/>
    <property type="match status" value="1"/>
</dbReference>
<dbReference type="PIRSF" id="PIRSF004486">
    <property type="entry name" value="MraW"/>
    <property type="match status" value="1"/>
</dbReference>
<dbReference type="SUPFAM" id="SSF81799">
    <property type="entry name" value="Putative methyltransferase TM0872, insert domain"/>
    <property type="match status" value="1"/>
</dbReference>
<dbReference type="SUPFAM" id="SSF53335">
    <property type="entry name" value="S-adenosyl-L-methionine-dependent methyltransferases"/>
    <property type="match status" value="1"/>
</dbReference>